<comment type="function">
    <text evidence="1">Together with LptD, is involved in the assembly of lipopolysaccharide (LPS) at the surface of the outer membrane. Required for the proper assembly of LptD. Binds LPS and may serve as the LPS recognition site at the outer membrane.</text>
</comment>
<comment type="subunit">
    <text evidence="1">Component of the lipopolysaccharide transport and assembly complex. Interacts with LptD.</text>
</comment>
<comment type="subcellular location">
    <subcellularLocation>
        <location evidence="1">Cell outer membrane</location>
        <topology evidence="1">Lipid-anchor</topology>
    </subcellularLocation>
</comment>
<comment type="similarity">
    <text evidence="1">Belongs to the LptE lipoprotein family.</text>
</comment>
<gene>
    <name evidence="1" type="primary">lptE</name>
    <name type="synonym">rlpB</name>
    <name type="ordered locus">E2348C_0541</name>
</gene>
<sequence>MRYLATLLLSLAVLITAGCGWHLRDTTQVPSTMKVMILDSGDPNGPLSRAVRNQLRLNGVELLDKETTRKDVPSLRLGKVSIAKDTASVFRNGQTAEYQMIMTVNATVLIPGRDIYPISAKVFRSFFDNPQMALAKDNEQDMIVKEMYDRAAEQLIRKLPSIRAADIRSDEEQTSTTTDTPATPARVSTTLGN</sequence>
<dbReference type="EMBL" id="FM180568">
    <property type="protein sequence ID" value="CAS08089.1"/>
    <property type="molecule type" value="Genomic_DNA"/>
</dbReference>
<dbReference type="RefSeq" id="WP_001269673.1">
    <property type="nucleotide sequence ID" value="NC_011601.1"/>
</dbReference>
<dbReference type="SMR" id="B7UKT1"/>
<dbReference type="GeneID" id="93776841"/>
<dbReference type="KEGG" id="ecg:E2348C_0541"/>
<dbReference type="HOGENOM" id="CLU_103309_1_1_6"/>
<dbReference type="Proteomes" id="UP000008205">
    <property type="component" value="Chromosome"/>
</dbReference>
<dbReference type="GO" id="GO:0009279">
    <property type="term" value="C:cell outer membrane"/>
    <property type="evidence" value="ECO:0007669"/>
    <property type="project" value="UniProtKB-SubCell"/>
</dbReference>
<dbReference type="GO" id="GO:1990351">
    <property type="term" value="C:transporter complex"/>
    <property type="evidence" value="ECO:0007669"/>
    <property type="project" value="TreeGrafter"/>
</dbReference>
<dbReference type="GO" id="GO:0001530">
    <property type="term" value="F:lipopolysaccharide binding"/>
    <property type="evidence" value="ECO:0007669"/>
    <property type="project" value="TreeGrafter"/>
</dbReference>
<dbReference type="GO" id="GO:0043165">
    <property type="term" value="P:Gram-negative-bacterium-type cell outer membrane assembly"/>
    <property type="evidence" value="ECO:0007669"/>
    <property type="project" value="UniProtKB-UniRule"/>
</dbReference>
<dbReference type="GO" id="GO:0015920">
    <property type="term" value="P:lipopolysaccharide transport"/>
    <property type="evidence" value="ECO:0007669"/>
    <property type="project" value="TreeGrafter"/>
</dbReference>
<dbReference type="FunFam" id="3.30.160.150:FF:000001">
    <property type="entry name" value="LPS-assembly lipoprotein LptE"/>
    <property type="match status" value="1"/>
</dbReference>
<dbReference type="Gene3D" id="3.30.160.150">
    <property type="entry name" value="Lipoprotein like domain"/>
    <property type="match status" value="1"/>
</dbReference>
<dbReference type="HAMAP" id="MF_01186">
    <property type="entry name" value="LPS_assembly_LptE"/>
    <property type="match status" value="1"/>
</dbReference>
<dbReference type="InterPro" id="IPR007485">
    <property type="entry name" value="LPS_assembly_LptE"/>
</dbReference>
<dbReference type="NCBIfam" id="NF008062">
    <property type="entry name" value="PRK10796.1"/>
    <property type="match status" value="1"/>
</dbReference>
<dbReference type="PANTHER" id="PTHR38098">
    <property type="entry name" value="LPS-ASSEMBLY LIPOPROTEIN LPTE"/>
    <property type="match status" value="1"/>
</dbReference>
<dbReference type="PANTHER" id="PTHR38098:SF1">
    <property type="entry name" value="LPS-ASSEMBLY LIPOPROTEIN LPTE"/>
    <property type="match status" value="1"/>
</dbReference>
<dbReference type="Pfam" id="PF04390">
    <property type="entry name" value="LptE"/>
    <property type="match status" value="1"/>
</dbReference>
<dbReference type="PROSITE" id="PS51257">
    <property type="entry name" value="PROKAR_LIPOPROTEIN"/>
    <property type="match status" value="1"/>
</dbReference>
<organism>
    <name type="scientific">Escherichia coli O127:H6 (strain E2348/69 / EPEC)</name>
    <dbReference type="NCBI Taxonomy" id="574521"/>
    <lineage>
        <taxon>Bacteria</taxon>
        <taxon>Pseudomonadati</taxon>
        <taxon>Pseudomonadota</taxon>
        <taxon>Gammaproteobacteria</taxon>
        <taxon>Enterobacterales</taxon>
        <taxon>Enterobacteriaceae</taxon>
        <taxon>Escherichia</taxon>
    </lineage>
</organism>
<protein>
    <recommendedName>
        <fullName evidence="1">LPS-assembly lipoprotein LptE</fullName>
    </recommendedName>
</protein>
<keyword id="KW-0998">Cell outer membrane</keyword>
<keyword id="KW-0449">Lipoprotein</keyword>
<keyword id="KW-0472">Membrane</keyword>
<keyword id="KW-0564">Palmitate</keyword>
<keyword id="KW-1185">Reference proteome</keyword>
<keyword id="KW-0732">Signal</keyword>
<feature type="signal peptide" evidence="1">
    <location>
        <begin position="1"/>
        <end position="18"/>
    </location>
</feature>
<feature type="chain" id="PRO_1000164473" description="LPS-assembly lipoprotein LptE">
    <location>
        <begin position="19"/>
        <end position="193"/>
    </location>
</feature>
<feature type="region of interest" description="Disordered" evidence="2">
    <location>
        <begin position="166"/>
        <end position="193"/>
    </location>
</feature>
<feature type="compositionally biased region" description="Low complexity" evidence="2">
    <location>
        <begin position="174"/>
        <end position="186"/>
    </location>
</feature>
<feature type="lipid moiety-binding region" description="N-palmitoyl cysteine" evidence="1">
    <location>
        <position position="19"/>
    </location>
</feature>
<feature type="lipid moiety-binding region" description="S-diacylglycerol cysteine" evidence="1">
    <location>
        <position position="19"/>
    </location>
</feature>
<reference key="1">
    <citation type="journal article" date="2009" name="J. Bacteriol.">
        <title>Complete genome sequence and comparative genome analysis of enteropathogenic Escherichia coli O127:H6 strain E2348/69.</title>
        <authorList>
            <person name="Iguchi A."/>
            <person name="Thomson N.R."/>
            <person name="Ogura Y."/>
            <person name="Saunders D."/>
            <person name="Ooka T."/>
            <person name="Henderson I.R."/>
            <person name="Harris D."/>
            <person name="Asadulghani M."/>
            <person name="Kurokawa K."/>
            <person name="Dean P."/>
            <person name="Kenny B."/>
            <person name="Quail M.A."/>
            <person name="Thurston S."/>
            <person name="Dougan G."/>
            <person name="Hayashi T."/>
            <person name="Parkhill J."/>
            <person name="Frankel G."/>
        </authorList>
    </citation>
    <scope>NUCLEOTIDE SEQUENCE [LARGE SCALE GENOMIC DNA]</scope>
    <source>
        <strain>E2348/69 / EPEC</strain>
    </source>
</reference>
<evidence type="ECO:0000255" key="1">
    <source>
        <dbReference type="HAMAP-Rule" id="MF_01186"/>
    </source>
</evidence>
<evidence type="ECO:0000256" key="2">
    <source>
        <dbReference type="SAM" id="MobiDB-lite"/>
    </source>
</evidence>
<accession>B7UKT1</accession>
<name>LPTE_ECO27</name>
<proteinExistence type="inferred from homology"/>